<protein>
    <recommendedName>
        <fullName evidence="1">Ketol-acid reductoisomerase (NADP(+))</fullName>
        <shortName evidence="1">KARI</shortName>
        <ecNumber evidence="1">1.1.1.86</ecNumber>
    </recommendedName>
    <alternativeName>
        <fullName evidence="1">Acetohydroxy-acid isomeroreductase</fullName>
        <shortName evidence="1">AHIR</shortName>
    </alternativeName>
    <alternativeName>
        <fullName evidence="1">Alpha-keto-beta-hydroxylacyl reductoisomerase</fullName>
    </alternativeName>
    <alternativeName>
        <fullName evidence="1">Ketol-acid reductoisomerase type 1</fullName>
    </alternativeName>
    <alternativeName>
        <fullName evidence="1">Ketol-acid reductoisomerase type I</fullName>
    </alternativeName>
</protein>
<name>ILVC_LEPBL</name>
<proteinExistence type="inferred from homology"/>
<feature type="chain" id="PRO_1000072323" description="Ketol-acid reductoisomerase (NADP(+))">
    <location>
        <begin position="1"/>
        <end position="333"/>
    </location>
</feature>
<feature type="domain" description="KARI N-terminal Rossmann" evidence="2">
    <location>
        <begin position="2"/>
        <end position="182"/>
    </location>
</feature>
<feature type="domain" description="KARI C-terminal knotted" evidence="3">
    <location>
        <begin position="183"/>
        <end position="331"/>
    </location>
</feature>
<feature type="active site" evidence="1">
    <location>
        <position position="108"/>
    </location>
</feature>
<feature type="binding site" evidence="1">
    <location>
        <begin position="25"/>
        <end position="28"/>
    </location>
    <ligand>
        <name>NADP(+)</name>
        <dbReference type="ChEBI" id="CHEBI:58349"/>
    </ligand>
</feature>
<feature type="binding site" evidence="1">
    <location>
        <position position="48"/>
    </location>
    <ligand>
        <name>NADP(+)</name>
        <dbReference type="ChEBI" id="CHEBI:58349"/>
    </ligand>
</feature>
<feature type="binding site" evidence="1">
    <location>
        <position position="51"/>
    </location>
    <ligand>
        <name>NADP(+)</name>
        <dbReference type="ChEBI" id="CHEBI:58349"/>
    </ligand>
</feature>
<feature type="binding site" evidence="1">
    <location>
        <position position="53"/>
    </location>
    <ligand>
        <name>NADP(+)</name>
        <dbReference type="ChEBI" id="CHEBI:58349"/>
    </ligand>
</feature>
<feature type="binding site" evidence="1">
    <location>
        <begin position="83"/>
        <end position="86"/>
    </location>
    <ligand>
        <name>NADP(+)</name>
        <dbReference type="ChEBI" id="CHEBI:58349"/>
    </ligand>
</feature>
<feature type="binding site" evidence="1">
    <location>
        <position position="134"/>
    </location>
    <ligand>
        <name>NADP(+)</name>
        <dbReference type="ChEBI" id="CHEBI:58349"/>
    </ligand>
</feature>
<feature type="binding site" evidence="1">
    <location>
        <position position="191"/>
    </location>
    <ligand>
        <name>Mg(2+)</name>
        <dbReference type="ChEBI" id="CHEBI:18420"/>
        <label>1</label>
    </ligand>
</feature>
<feature type="binding site" evidence="1">
    <location>
        <position position="191"/>
    </location>
    <ligand>
        <name>Mg(2+)</name>
        <dbReference type="ChEBI" id="CHEBI:18420"/>
        <label>2</label>
    </ligand>
</feature>
<feature type="binding site" evidence="1">
    <location>
        <position position="195"/>
    </location>
    <ligand>
        <name>Mg(2+)</name>
        <dbReference type="ChEBI" id="CHEBI:18420"/>
        <label>1</label>
    </ligand>
</feature>
<feature type="binding site" evidence="1">
    <location>
        <position position="227"/>
    </location>
    <ligand>
        <name>Mg(2+)</name>
        <dbReference type="ChEBI" id="CHEBI:18420"/>
        <label>2</label>
    </ligand>
</feature>
<feature type="binding site" evidence="1">
    <location>
        <position position="231"/>
    </location>
    <ligand>
        <name>Mg(2+)</name>
        <dbReference type="ChEBI" id="CHEBI:18420"/>
        <label>2</label>
    </ligand>
</feature>
<feature type="binding site" evidence="1">
    <location>
        <position position="252"/>
    </location>
    <ligand>
        <name>substrate</name>
    </ligand>
</feature>
<reference key="1">
    <citation type="journal article" date="2006" name="Proc. Natl. Acad. Sci. U.S.A.">
        <title>Genome reduction in Leptospira borgpetersenii reflects limited transmission potential.</title>
        <authorList>
            <person name="Bulach D.M."/>
            <person name="Zuerner R.L."/>
            <person name="Wilson P."/>
            <person name="Seemann T."/>
            <person name="McGrath A."/>
            <person name="Cullen P.A."/>
            <person name="Davis J."/>
            <person name="Johnson M."/>
            <person name="Kuczek E."/>
            <person name="Alt D.P."/>
            <person name="Peterson-Burch B."/>
            <person name="Coppel R.L."/>
            <person name="Rood J.I."/>
            <person name="Davies J.K."/>
            <person name="Adler B."/>
        </authorList>
    </citation>
    <scope>NUCLEOTIDE SEQUENCE [LARGE SCALE GENOMIC DNA]</scope>
    <source>
        <strain>L550</strain>
    </source>
</reference>
<accession>Q056H8</accession>
<keyword id="KW-0028">Amino-acid biosynthesis</keyword>
<keyword id="KW-0100">Branched-chain amino acid biosynthesis</keyword>
<keyword id="KW-0460">Magnesium</keyword>
<keyword id="KW-0479">Metal-binding</keyword>
<keyword id="KW-0521">NADP</keyword>
<keyword id="KW-0560">Oxidoreductase</keyword>
<comment type="function">
    <text evidence="1">Involved in the biosynthesis of branched-chain amino acids (BCAA). Catalyzes an alkyl-migration followed by a ketol-acid reduction of (S)-2-acetolactate (S2AL) to yield (R)-2,3-dihydroxy-isovalerate. In the isomerase reaction, S2AL is rearranged via a Mg-dependent methyl migration to produce 3-hydroxy-3-methyl-2-ketobutyrate (HMKB). In the reductase reaction, this 2-ketoacid undergoes a metal-dependent reduction by NADPH to yield (R)-2,3-dihydroxy-isovalerate.</text>
</comment>
<comment type="catalytic activity">
    <reaction evidence="1">
        <text>(2R)-2,3-dihydroxy-3-methylbutanoate + NADP(+) = (2S)-2-acetolactate + NADPH + H(+)</text>
        <dbReference type="Rhea" id="RHEA:22068"/>
        <dbReference type="ChEBI" id="CHEBI:15378"/>
        <dbReference type="ChEBI" id="CHEBI:49072"/>
        <dbReference type="ChEBI" id="CHEBI:57783"/>
        <dbReference type="ChEBI" id="CHEBI:58349"/>
        <dbReference type="ChEBI" id="CHEBI:58476"/>
        <dbReference type="EC" id="1.1.1.86"/>
    </reaction>
</comment>
<comment type="catalytic activity">
    <reaction evidence="1">
        <text>(2R,3R)-2,3-dihydroxy-3-methylpentanoate + NADP(+) = (S)-2-ethyl-2-hydroxy-3-oxobutanoate + NADPH + H(+)</text>
        <dbReference type="Rhea" id="RHEA:13493"/>
        <dbReference type="ChEBI" id="CHEBI:15378"/>
        <dbReference type="ChEBI" id="CHEBI:49256"/>
        <dbReference type="ChEBI" id="CHEBI:49258"/>
        <dbReference type="ChEBI" id="CHEBI:57783"/>
        <dbReference type="ChEBI" id="CHEBI:58349"/>
        <dbReference type="EC" id="1.1.1.86"/>
    </reaction>
</comment>
<comment type="cofactor">
    <cofactor evidence="1">
        <name>Mg(2+)</name>
        <dbReference type="ChEBI" id="CHEBI:18420"/>
    </cofactor>
    <text evidence="1">Binds 2 magnesium ions per subunit.</text>
</comment>
<comment type="pathway">
    <text evidence="1">Amino-acid biosynthesis; L-isoleucine biosynthesis; L-isoleucine from 2-oxobutanoate: step 2/4.</text>
</comment>
<comment type="pathway">
    <text evidence="1">Amino-acid biosynthesis; L-valine biosynthesis; L-valine from pyruvate: step 2/4.</text>
</comment>
<comment type="similarity">
    <text evidence="1">Belongs to the ketol-acid reductoisomerase family.</text>
</comment>
<gene>
    <name evidence="1" type="primary">ilvC</name>
    <name type="ordered locus">LBL_0149</name>
</gene>
<evidence type="ECO:0000255" key="1">
    <source>
        <dbReference type="HAMAP-Rule" id="MF_00435"/>
    </source>
</evidence>
<evidence type="ECO:0000255" key="2">
    <source>
        <dbReference type="PROSITE-ProRule" id="PRU01197"/>
    </source>
</evidence>
<evidence type="ECO:0000255" key="3">
    <source>
        <dbReference type="PROSITE-ProRule" id="PRU01198"/>
    </source>
</evidence>
<sequence>MANIYYDADCDLSSLKGKTIAVIGYGSQGHAQAQNMKDSGLKVIIGLKEGSKSIQDAKNAGFEVYSVAEASQKADVIQILAPDTIQADLYKKDIEPNLKKGNALVFSHGFNIHYDFIKPPEEVDVYMVAPKGPGHLVRRVYTEGGGVPCLIAVHQDSTGEAKKRALAHAAGVGGGRAGILETSFREETETDLFGEQVVLCGGLSNLIMAGFETLTEAGYDPEIAYFECLHEVKLITDLIYEGGLARMRFSISDTAEYGDYVSGPRVIDPGVKQRMKEVLNDIQKDKGAKFATNWMAETKAGYPNFKNMRDKNAAHPIESVGKKLRSMMKWLSK</sequence>
<organism>
    <name type="scientific">Leptospira borgpetersenii serovar Hardjo-bovis (strain L550)</name>
    <dbReference type="NCBI Taxonomy" id="355276"/>
    <lineage>
        <taxon>Bacteria</taxon>
        <taxon>Pseudomonadati</taxon>
        <taxon>Spirochaetota</taxon>
        <taxon>Spirochaetia</taxon>
        <taxon>Leptospirales</taxon>
        <taxon>Leptospiraceae</taxon>
        <taxon>Leptospira</taxon>
    </lineage>
</organism>
<dbReference type="EC" id="1.1.1.86" evidence="1"/>
<dbReference type="EMBL" id="CP000348">
    <property type="protein sequence ID" value="ABJ77767.1"/>
    <property type="molecule type" value="Genomic_DNA"/>
</dbReference>
<dbReference type="RefSeq" id="WP_002734957.1">
    <property type="nucleotide sequence ID" value="NC_008508.1"/>
</dbReference>
<dbReference type="SMR" id="Q056H8"/>
<dbReference type="GeneID" id="61175363"/>
<dbReference type="KEGG" id="lbl:LBL_0149"/>
<dbReference type="HOGENOM" id="CLU_033821_0_1_12"/>
<dbReference type="UniPathway" id="UPA00047">
    <property type="reaction ID" value="UER00056"/>
</dbReference>
<dbReference type="UniPathway" id="UPA00049">
    <property type="reaction ID" value="UER00060"/>
</dbReference>
<dbReference type="GO" id="GO:0005829">
    <property type="term" value="C:cytosol"/>
    <property type="evidence" value="ECO:0007669"/>
    <property type="project" value="TreeGrafter"/>
</dbReference>
<dbReference type="GO" id="GO:0004455">
    <property type="term" value="F:ketol-acid reductoisomerase activity"/>
    <property type="evidence" value="ECO:0007669"/>
    <property type="project" value="UniProtKB-UniRule"/>
</dbReference>
<dbReference type="GO" id="GO:0000287">
    <property type="term" value="F:magnesium ion binding"/>
    <property type="evidence" value="ECO:0007669"/>
    <property type="project" value="UniProtKB-UniRule"/>
</dbReference>
<dbReference type="GO" id="GO:0050661">
    <property type="term" value="F:NADP binding"/>
    <property type="evidence" value="ECO:0007669"/>
    <property type="project" value="InterPro"/>
</dbReference>
<dbReference type="GO" id="GO:0009097">
    <property type="term" value="P:isoleucine biosynthetic process"/>
    <property type="evidence" value="ECO:0007669"/>
    <property type="project" value="UniProtKB-UniRule"/>
</dbReference>
<dbReference type="GO" id="GO:0009099">
    <property type="term" value="P:L-valine biosynthetic process"/>
    <property type="evidence" value="ECO:0007669"/>
    <property type="project" value="UniProtKB-UniRule"/>
</dbReference>
<dbReference type="FunFam" id="3.40.50.720:FF:000023">
    <property type="entry name" value="Ketol-acid reductoisomerase (NADP(+))"/>
    <property type="match status" value="1"/>
</dbReference>
<dbReference type="Gene3D" id="6.10.240.10">
    <property type="match status" value="1"/>
</dbReference>
<dbReference type="Gene3D" id="3.40.50.720">
    <property type="entry name" value="NAD(P)-binding Rossmann-like Domain"/>
    <property type="match status" value="1"/>
</dbReference>
<dbReference type="HAMAP" id="MF_00435">
    <property type="entry name" value="IlvC"/>
    <property type="match status" value="1"/>
</dbReference>
<dbReference type="InterPro" id="IPR008927">
    <property type="entry name" value="6-PGluconate_DH-like_C_sf"/>
</dbReference>
<dbReference type="InterPro" id="IPR013023">
    <property type="entry name" value="KARI"/>
</dbReference>
<dbReference type="InterPro" id="IPR000506">
    <property type="entry name" value="KARI_C"/>
</dbReference>
<dbReference type="InterPro" id="IPR013116">
    <property type="entry name" value="KARI_N"/>
</dbReference>
<dbReference type="InterPro" id="IPR014359">
    <property type="entry name" value="KARI_prok"/>
</dbReference>
<dbReference type="InterPro" id="IPR036291">
    <property type="entry name" value="NAD(P)-bd_dom_sf"/>
</dbReference>
<dbReference type="NCBIfam" id="TIGR00465">
    <property type="entry name" value="ilvC"/>
    <property type="match status" value="1"/>
</dbReference>
<dbReference type="NCBIfam" id="NF004017">
    <property type="entry name" value="PRK05479.1"/>
    <property type="match status" value="1"/>
</dbReference>
<dbReference type="NCBIfam" id="NF009940">
    <property type="entry name" value="PRK13403.1"/>
    <property type="match status" value="1"/>
</dbReference>
<dbReference type="PANTHER" id="PTHR21371">
    <property type="entry name" value="KETOL-ACID REDUCTOISOMERASE, MITOCHONDRIAL"/>
    <property type="match status" value="1"/>
</dbReference>
<dbReference type="PANTHER" id="PTHR21371:SF1">
    <property type="entry name" value="KETOL-ACID REDUCTOISOMERASE, MITOCHONDRIAL"/>
    <property type="match status" value="1"/>
</dbReference>
<dbReference type="Pfam" id="PF01450">
    <property type="entry name" value="KARI_C"/>
    <property type="match status" value="1"/>
</dbReference>
<dbReference type="Pfam" id="PF07991">
    <property type="entry name" value="KARI_N"/>
    <property type="match status" value="1"/>
</dbReference>
<dbReference type="PIRSF" id="PIRSF000116">
    <property type="entry name" value="IlvC_gammaproteo"/>
    <property type="match status" value="1"/>
</dbReference>
<dbReference type="SUPFAM" id="SSF48179">
    <property type="entry name" value="6-phosphogluconate dehydrogenase C-terminal domain-like"/>
    <property type="match status" value="1"/>
</dbReference>
<dbReference type="SUPFAM" id="SSF51735">
    <property type="entry name" value="NAD(P)-binding Rossmann-fold domains"/>
    <property type="match status" value="1"/>
</dbReference>
<dbReference type="PROSITE" id="PS51851">
    <property type="entry name" value="KARI_C"/>
    <property type="match status" value="1"/>
</dbReference>
<dbReference type="PROSITE" id="PS51850">
    <property type="entry name" value="KARI_N"/>
    <property type="match status" value="1"/>
</dbReference>